<evidence type="ECO:0000255" key="1">
    <source>
        <dbReference type="HAMAP-Rule" id="MF_00041"/>
    </source>
</evidence>
<feature type="chain" id="PRO_1000090835" description="Cysteine--tRNA ligase">
    <location>
        <begin position="1"/>
        <end position="461"/>
    </location>
</feature>
<feature type="short sequence motif" description="'HIGH' region">
    <location>
        <begin position="30"/>
        <end position="40"/>
    </location>
</feature>
<feature type="short sequence motif" description="'KMSKS' region">
    <location>
        <begin position="266"/>
        <end position="270"/>
    </location>
</feature>
<feature type="binding site" evidence="1">
    <location>
        <position position="28"/>
    </location>
    <ligand>
        <name>Zn(2+)</name>
        <dbReference type="ChEBI" id="CHEBI:29105"/>
    </ligand>
</feature>
<feature type="binding site" evidence="1">
    <location>
        <position position="209"/>
    </location>
    <ligand>
        <name>Zn(2+)</name>
        <dbReference type="ChEBI" id="CHEBI:29105"/>
    </ligand>
</feature>
<feature type="binding site" evidence="1">
    <location>
        <position position="234"/>
    </location>
    <ligand>
        <name>Zn(2+)</name>
        <dbReference type="ChEBI" id="CHEBI:29105"/>
    </ligand>
</feature>
<feature type="binding site" evidence="1">
    <location>
        <position position="238"/>
    </location>
    <ligand>
        <name>Zn(2+)</name>
        <dbReference type="ChEBI" id="CHEBI:29105"/>
    </ligand>
</feature>
<feature type="binding site" evidence="1">
    <location>
        <position position="269"/>
    </location>
    <ligand>
        <name>ATP</name>
        <dbReference type="ChEBI" id="CHEBI:30616"/>
    </ligand>
</feature>
<name>SYC_ECOSE</name>
<protein>
    <recommendedName>
        <fullName evidence="1">Cysteine--tRNA ligase</fullName>
        <ecNumber evidence="1">6.1.1.16</ecNumber>
    </recommendedName>
    <alternativeName>
        <fullName evidence="1">Cysteinyl-tRNA synthetase</fullName>
        <shortName evidence="1">CysRS</shortName>
    </alternativeName>
</protein>
<gene>
    <name evidence="1" type="primary">cysS</name>
    <name type="ordered locus">ECSE_0551</name>
</gene>
<comment type="catalytic activity">
    <reaction evidence="1">
        <text>tRNA(Cys) + L-cysteine + ATP = L-cysteinyl-tRNA(Cys) + AMP + diphosphate</text>
        <dbReference type="Rhea" id="RHEA:17773"/>
        <dbReference type="Rhea" id="RHEA-COMP:9661"/>
        <dbReference type="Rhea" id="RHEA-COMP:9679"/>
        <dbReference type="ChEBI" id="CHEBI:30616"/>
        <dbReference type="ChEBI" id="CHEBI:33019"/>
        <dbReference type="ChEBI" id="CHEBI:35235"/>
        <dbReference type="ChEBI" id="CHEBI:78442"/>
        <dbReference type="ChEBI" id="CHEBI:78517"/>
        <dbReference type="ChEBI" id="CHEBI:456215"/>
        <dbReference type="EC" id="6.1.1.16"/>
    </reaction>
</comment>
<comment type="cofactor">
    <cofactor evidence="1">
        <name>Zn(2+)</name>
        <dbReference type="ChEBI" id="CHEBI:29105"/>
    </cofactor>
    <text evidence="1">Binds 1 zinc ion per subunit.</text>
</comment>
<comment type="subunit">
    <text evidence="1">Monomer.</text>
</comment>
<comment type="subcellular location">
    <subcellularLocation>
        <location evidence="1">Cytoplasm</location>
    </subcellularLocation>
</comment>
<comment type="similarity">
    <text evidence="1">Belongs to the class-I aminoacyl-tRNA synthetase family.</text>
</comment>
<organism>
    <name type="scientific">Escherichia coli (strain SE11)</name>
    <dbReference type="NCBI Taxonomy" id="409438"/>
    <lineage>
        <taxon>Bacteria</taxon>
        <taxon>Pseudomonadati</taxon>
        <taxon>Pseudomonadota</taxon>
        <taxon>Gammaproteobacteria</taxon>
        <taxon>Enterobacterales</taxon>
        <taxon>Enterobacteriaceae</taxon>
        <taxon>Escherichia</taxon>
    </lineage>
</organism>
<sequence length="461" mass="52184">MLKIFNTLTRQKEEFKPIHAGEVGMYVCGITVYDLCHIGHGRTFVAFDVVARYLRFLGYKLKYVRNITDIDDKIIKRANENGESFVALVDRMIAEMHKDFDALNILRPDMEPRATHHIAEIIELTEQLIAKGHAYVADNGDVMFDVPTDPTYGVLSRQDLDQLQAGARVDVVDDKRNPMDFVLWKMSKEGEPSWPSPWGAGRPGWHIECSAMNCKQLGNHFDIHGGGSDLMFPHHENEIAQSTCAHDGQYVNYWMHSGMVMVDREKMSKSLGNFFTVRDVLKYYDAETVRYFLMSGHYRSQLNYSEENLKQARAALERLYTALRGTDKTVAPAGGEAFEARFIEAMDDDFNTPEAYSVLFDMAREVNRLKAEDMAAANAMASHLRKLSAVLGLLEQEPEAFLQSGAQADDSEVAEIEALIQQRLDARKAKDWAAADAARDRLNEMGIVLEDGPQGTTWRRK</sequence>
<reference key="1">
    <citation type="journal article" date="2008" name="DNA Res.">
        <title>Complete genome sequence and comparative analysis of the wild-type commensal Escherichia coli strain SE11 isolated from a healthy adult.</title>
        <authorList>
            <person name="Oshima K."/>
            <person name="Toh H."/>
            <person name="Ogura Y."/>
            <person name="Sasamoto H."/>
            <person name="Morita H."/>
            <person name="Park S.-H."/>
            <person name="Ooka T."/>
            <person name="Iyoda S."/>
            <person name="Taylor T.D."/>
            <person name="Hayashi T."/>
            <person name="Itoh K."/>
            <person name="Hattori M."/>
        </authorList>
    </citation>
    <scope>NUCLEOTIDE SEQUENCE [LARGE SCALE GENOMIC DNA]</scope>
    <source>
        <strain>SE11</strain>
    </source>
</reference>
<accession>B6I0H1</accession>
<dbReference type="EC" id="6.1.1.16" evidence="1"/>
<dbReference type="EMBL" id="AP009240">
    <property type="protein sequence ID" value="BAG76075.1"/>
    <property type="molecule type" value="Genomic_DNA"/>
</dbReference>
<dbReference type="RefSeq" id="WP_000912345.1">
    <property type="nucleotide sequence ID" value="NC_011415.1"/>
</dbReference>
<dbReference type="SMR" id="B6I0H1"/>
<dbReference type="GeneID" id="75204392"/>
<dbReference type="KEGG" id="ecy:ECSE_0551"/>
<dbReference type="HOGENOM" id="CLU_013528_0_1_6"/>
<dbReference type="Proteomes" id="UP000008199">
    <property type="component" value="Chromosome"/>
</dbReference>
<dbReference type="GO" id="GO:0005829">
    <property type="term" value="C:cytosol"/>
    <property type="evidence" value="ECO:0007669"/>
    <property type="project" value="TreeGrafter"/>
</dbReference>
<dbReference type="GO" id="GO:0005524">
    <property type="term" value="F:ATP binding"/>
    <property type="evidence" value="ECO:0007669"/>
    <property type="project" value="UniProtKB-UniRule"/>
</dbReference>
<dbReference type="GO" id="GO:0004817">
    <property type="term" value="F:cysteine-tRNA ligase activity"/>
    <property type="evidence" value="ECO:0007669"/>
    <property type="project" value="UniProtKB-UniRule"/>
</dbReference>
<dbReference type="GO" id="GO:0008270">
    <property type="term" value="F:zinc ion binding"/>
    <property type="evidence" value="ECO:0007669"/>
    <property type="project" value="UniProtKB-UniRule"/>
</dbReference>
<dbReference type="GO" id="GO:0006423">
    <property type="term" value="P:cysteinyl-tRNA aminoacylation"/>
    <property type="evidence" value="ECO:0007669"/>
    <property type="project" value="UniProtKB-UniRule"/>
</dbReference>
<dbReference type="CDD" id="cd07963">
    <property type="entry name" value="Anticodon_Ia_Cys"/>
    <property type="match status" value="1"/>
</dbReference>
<dbReference type="CDD" id="cd00672">
    <property type="entry name" value="CysRS_core"/>
    <property type="match status" value="1"/>
</dbReference>
<dbReference type="FunFam" id="1.20.120.1910:FF:000001">
    <property type="entry name" value="Cysteine--tRNA ligase"/>
    <property type="match status" value="1"/>
</dbReference>
<dbReference type="FunFam" id="3.40.50.620:FF:000009">
    <property type="entry name" value="Cysteine--tRNA ligase"/>
    <property type="match status" value="1"/>
</dbReference>
<dbReference type="Gene3D" id="1.20.120.1910">
    <property type="entry name" value="Cysteine-tRNA ligase, C-terminal anti-codon recognition domain"/>
    <property type="match status" value="1"/>
</dbReference>
<dbReference type="Gene3D" id="3.40.50.620">
    <property type="entry name" value="HUPs"/>
    <property type="match status" value="1"/>
</dbReference>
<dbReference type="HAMAP" id="MF_00041">
    <property type="entry name" value="Cys_tRNA_synth"/>
    <property type="match status" value="1"/>
</dbReference>
<dbReference type="InterPro" id="IPR015803">
    <property type="entry name" value="Cys-tRNA-ligase"/>
</dbReference>
<dbReference type="InterPro" id="IPR015273">
    <property type="entry name" value="Cys-tRNA-synt_Ia_DALR"/>
</dbReference>
<dbReference type="InterPro" id="IPR024909">
    <property type="entry name" value="Cys-tRNA/MSH_ligase"/>
</dbReference>
<dbReference type="InterPro" id="IPR056411">
    <property type="entry name" value="CysS_C"/>
</dbReference>
<dbReference type="InterPro" id="IPR014729">
    <property type="entry name" value="Rossmann-like_a/b/a_fold"/>
</dbReference>
<dbReference type="InterPro" id="IPR032678">
    <property type="entry name" value="tRNA-synt_1_cat_dom"/>
</dbReference>
<dbReference type="InterPro" id="IPR009080">
    <property type="entry name" value="tRNAsynth_Ia_anticodon-bd"/>
</dbReference>
<dbReference type="NCBIfam" id="TIGR00435">
    <property type="entry name" value="cysS"/>
    <property type="match status" value="1"/>
</dbReference>
<dbReference type="PANTHER" id="PTHR10890:SF3">
    <property type="entry name" value="CYSTEINE--TRNA LIGASE, CYTOPLASMIC"/>
    <property type="match status" value="1"/>
</dbReference>
<dbReference type="PANTHER" id="PTHR10890">
    <property type="entry name" value="CYSTEINYL-TRNA SYNTHETASE"/>
    <property type="match status" value="1"/>
</dbReference>
<dbReference type="Pfam" id="PF23493">
    <property type="entry name" value="CysS_C"/>
    <property type="match status" value="1"/>
</dbReference>
<dbReference type="Pfam" id="PF09190">
    <property type="entry name" value="DALR_2"/>
    <property type="match status" value="1"/>
</dbReference>
<dbReference type="Pfam" id="PF01406">
    <property type="entry name" value="tRNA-synt_1e"/>
    <property type="match status" value="1"/>
</dbReference>
<dbReference type="PRINTS" id="PR00983">
    <property type="entry name" value="TRNASYNTHCYS"/>
</dbReference>
<dbReference type="SMART" id="SM00840">
    <property type="entry name" value="DALR_2"/>
    <property type="match status" value="1"/>
</dbReference>
<dbReference type="SUPFAM" id="SSF47323">
    <property type="entry name" value="Anticodon-binding domain of a subclass of class I aminoacyl-tRNA synthetases"/>
    <property type="match status" value="1"/>
</dbReference>
<dbReference type="SUPFAM" id="SSF52374">
    <property type="entry name" value="Nucleotidylyl transferase"/>
    <property type="match status" value="1"/>
</dbReference>
<keyword id="KW-0030">Aminoacyl-tRNA synthetase</keyword>
<keyword id="KW-0067">ATP-binding</keyword>
<keyword id="KW-0963">Cytoplasm</keyword>
<keyword id="KW-0436">Ligase</keyword>
<keyword id="KW-0479">Metal-binding</keyword>
<keyword id="KW-0547">Nucleotide-binding</keyword>
<keyword id="KW-0648">Protein biosynthesis</keyword>
<keyword id="KW-0862">Zinc</keyword>
<proteinExistence type="inferred from homology"/>